<reference key="1">
    <citation type="journal article" date="2010" name="PLoS Genet.">
        <title>Genome sequence of the plant growth promoting endophytic bacterium Enterobacter sp. 638.</title>
        <authorList>
            <person name="Taghavi S."/>
            <person name="van der Lelie D."/>
            <person name="Hoffman A."/>
            <person name="Zhang Y.B."/>
            <person name="Walla M.D."/>
            <person name="Vangronsveld J."/>
            <person name="Newman L."/>
            <person name="Monchy S."/>
        </authorList>
    </citation>
    <scope>NUCLEOTIDE SEQUENCE [LARGE SCALE GENOMIC DNA]</scope>
    <source>
        <strain>638</strain>
    </source>
</reference>
<name>LSRR_ENT38</name>
<sequence>MSDKRIAEESRFAGLALTEEELVARVAWCYYHDGLTQNDIGERLGLPRLKISRLLEKGRQSGVIRVQINSRYEGCLALETELQQRFGLKLVRVLPALNTVPMNVRLGIGAAQSLMGVLEPGQLLAVGFGETTMSCIQHLSGFISSQQVRLVTLSGGVGPYMTGIGQLDAACSVSMIPAPLRVSSAEVAGILKREASVRDVILAATAADAAVVGIGSVNQRRDATILRAGYISEGEQLMYARKGAVGDILGYFLNAAGERVSDLEIHHELLGVTLDELAQLPTIVGVAGGEEKADAIYAALKGRLINGLVTEETTARAVLALAG</sequence>
<keyword id="KW-0963">Cytoplasm</keyword>
<keyword id="KW-0238">DNA-binding</keyword>
<keyword id="KW-0678">Repressor</keyword>
<keyword id="KW-0804">Transcription</keyword>
<keyword id="KW-0805">Transcription regulation</keyword>
<accession>A4WER5</accession>
<dbReference type="EMBL" id="CP000653">
    <property type="protein sequence ID" value="ABP62195.1"/>
    <property type="molecule type" value="Genomic_DNA"/>
</dbReference>
<dbReference type="RefSeq" id="WP_015960521.1">
    <property type="nucleotide sequence ID" value="NC_009436.1"/>
</dbReference>
<dbReference type="SMR" id="A4WER5"/>
<dbReference type="STRING" id="399742.Ent638_3537"/>
<dbReference type="KEGG" id="ent:Ent638_3537"/>
<dbReference type="eggNOG" id="COG2390">
    <property type="taxonomic scope" value="Bacteria"/>
</dbReference>
<dbReference type="HOGENOM" id="CLU_054506_0_1_6"/>
<dbReference type="OrthoDB" id="7065657at2"/>
<dbReference type="Proteomes" id="UP000000230">
    <property type="component" value="Chromosome"/>
</dbReference>
<dbReference type="GO" id="GO:0005737">
    <property type="term" value="C:cytoplasm"/>
    <property type="evidence" value="ECO:0007669"/>
    <property type="project" value="UniProtKB-SubCell"/>
</dbReference>
<dbReference type="GO" id="GO:0030246">
    <property type="term" value="F:carbohydrate binding"/>
    <property type="evidence" value="ECO:0007669"/>
    <property type="project" value="InterPro"/>
</dbReference>
<dbReference type="GO" id="GO:0003677">
    <property type="term" value="F:DNA binding"/>
    <property type="evidence" value="ECO:0007669"/>
    <property type="project" value="UniProtKB-KW"/>
</dbReference>
<dbReference type="Gene3D" id="3.40.50.1360">
    <property type="match status" value="1"/>
</dbReference>
<dbReference type="Gene3D" id="1.10.10.10">
    <property type="entry name" value="Winged helix-like DNA-binding domain superfamily/Winged helix DNA-binding domain"/>
    <property type="match status" value="1"/>
</dbReference>
<dbReference type="InterPro" id="IPR037171">
    <property type="entry name" value="NagB/RpiA_transferase-like"/>
</dbReference>
<dbReference type="InterPro" id="IPR051054">
    <property type="entry name" value="SorC_transcr_regulators"/>
</dbReference>
<dbReference type="InterPro" id="IPR007324">
    <property type="entry name" value="Sugar-bd_dom_put"/>
</dbReference>
<dbReference type="InterPro" id="IPR036388">
    <property type="entry name" value="WH-like_DNA-bd_sf"/>
</dbReference>
<dbReference type="NCBIfam" id="NF011947">
    <property type="entry name" value="PRK15418.1"/>
    <property type="match status" value="1"/>
</dbReference>
<dbReference type="PANTHER" id="PTHR34294:SF1">
    <property type="entry name" value="TRANSCRIPTIONAL REGULATOR LSRR"/>
    <property type="match status" value="1"/>
</dbReference>
<dbReference type="PANTHER" id="PTHR34294">
    <property type="entry name" value="TRANSCRIPTIONAL REGULATOR-RELATED"/>
    <property type="match status" value="1"/>
</dbReference>
<dbReference type="Pfam" id="PF04198">
    <property type="entry name" value="Sugar-bind"/>
    <property type="match status" value="1"/>
</dbReference>
<dbReference type="SUPFAM" id="SSF100950">
    <property type="entry name" value="NagB/RpiA/CoA transferase-like"/>
    <property type="match status" value="1"/>
</dbReference>
<protein>
    <recommendedName>
        <fullName evidence="1">Transcriptional regulator LsrR</fullName>
    </recommendedName>
</protein>
<evidence type="ECO:0000250" key="1">
    <source>
        <dbReference type="UniProtKB" id="Q8ZKQ5"/>
    </source>
</evidence>
<evidence type="ECO:0000305" key="2"/>
<comment type="function">
    <text evidence="1">Transcriptional regulator that represses the expression of the lsr operon in the absence of the quorum-sensing signaling molecule autoinducer 2 (AI-2) (By similarity). It also represses the expression of the lsrRK operon (By similarity). Acts by binding to the intergenic region between the lsr operon and lsrR (By similarity). In the presence of phosphorylated autoinducer-2 (phospho-AI-2), LsrR is inactivated, leading to the transcription of the genes (By similarity).</text>
</comment>
<comment type="activity regulation">
    <text evidence="1">Inactivated by phosphorylated autoinducer-2 (phospho-AI-2) (By similarity). Phospho-AI-2 acts by binding to LsrR, which is then unable to bind to the promoter regions, allowing the transcription of the target genes (By similarity).</text>
</comment>
<comment type="subcellular location">
    <subcellularLocation>
        <location evidence="2">Cytoplasm</location>
    </subcellularLocation>
</comment>
<comment type="similarity">
    <text evidence="2">Belongs to the SorC transcriptional regulatory family.</text>
</comment>
<gene>
    <name type="primary">lsrR</name>
    <name type="ordered locus">Ent638_3537</name>
</gene>
<proteinExistence type="inferred from homology"/>
<organism>
    <name type="scientific">Enterobacter sp. (strain 638)</name>
    <dbReference type="NCBI Taxonomy" id="399742"/>
    <lineage>
        <taxon>Bacteria</taxon>
        <taxon>Pseudomonadati</taxon>
        <taxon>Pseudomonadota</taxon>
        <taxon>Gammaproteobacteria</taxon>
        <taxon>Enterobacterales</taxon>
        <taxon>Enterobacteriaceae</taxon>
        <taxon>Enterobacter</taxon>
    </lineage>
</organism>
<feature type="chain" id="PRO_0000351610" description="Transcriptional regulator LsrR">
    <location>
        <begin position="1"/>
        <end position="323"/>
    </location>
</feature>
<feature type="DNA-binding region" description="H-T-H motif" evidence="2">
    <location>
        <begin position="37"/>
        <end position="60"/>
    </location>
</feature>